<feature type="chain" id="PRO_0000102819" description="Succinate--CoA ligase [ADP-forming] subunit beta">
    <location>
        <begin position="1"/>
        <end position="385"/>
    </location>
</feature>
<feature type="domain" description="ATP-grasp" evidence="1">
    <location>
        <begin position="9"/>
        <end position="244"/>
    </location>
</feature>
<feature type="binding site" evidence="1">
    <location>
        <position position="46"/>
    </location>
    <ligand>
        <name>ATP</name>
        <dbReference type="ChEBI" id="CHEBI:30616"/>
    </ligand>
</feature>
<feature type="binding site" evidence="1">
    <location>
        <begin position="53"/>
        <end position="55"/>
    </location>
    <ligand>
        <name>ATP</name>
        <dbReference type="ChEBI" id="CHEBI:30616"/>
    </ligand>
</feature>
<feature type="binding site" evidence="1">
    <location>
        <position position="99"/>
    </location>
    <ligand>
        <name>ATP</name>
        <dbReference type="ChEBI" id="CHEBI:30616"/>
    </ligand>
</feature>
<feature type="binding site" evidence="1">
    <location>
        <position position="102"/>
    </location>
    <ligand>
        <name>ATP</name>
        <dbReference type="ChEBI" id="CHEBI:30616"/>
    </ligand>
</feature>
<feature type="binding site" evidence="1">
    <location>
        <position position="107"/>
    </location>
    <ligand>
        <name>ATP</name>
        <dbReference type="ChEBI" id="CHEBI:30616"/>
    </ligand>
</feature>
<feature type="binding site" evidence="1">
    <location>
        <position position="199"/>
    </location>
    <ligand>
        <name>Mg(2+)</name>
        <dbReference type="ChEBI" id="CHEBI:18420"/>
    </ligand>
</feature>
<feature type="binding site" evidence="1">
    <location>
        <position position="213"/>
    </location>
    <ligand>
        <name>Mg(2+)</name>
        <dbReference type="ChEBI" id="CHEBI:18420"/>
    </ligand>
</feature>
<feature type="binding site" evidence="1">
    <location>
        <position position="264"/>
    </location>
    <ligand>
        <name>substrate</name>
        <note>ligand shared with subunit alpha</note>
    </ligand>
</feature>
<feature type="binding site" evidence="1">
    <location>
        <begin position="321"/>
        <end position="323"/>
    </location>
    <ligand>
        <name>substrate</name>
        <note>ligand shared with subunit alpha</note>
    </ligand>
</feature>
<feature type="modified residue" description="Phosphoserine" evidence="2">
    <location>
        <position position="220"/>
    </location>
</feature>
<accession>P80886</accession>
<name>SUCC_BACSU</name>
<keyword id="KW-0067">ATP-binding</keyword>
<keyword id="KW-0903">Direct protein sequencing</keyword>
<keyword id="KW-0436">Ligase</keyword>
<keyword id="KW-0460">Magnesium</keyword>
<keyword id="KW-0479">Metal-binding</keyword>
<keyword id="KW-0547">Nucleotide-binding</keyword>
<keyword id="KW-0597">Phosphoprotein</keyword>
<keyword id="KW-1185">Reference proteome</keyword>
<keyword id="KW-0816">Tricarboxylic acid cycle</keyword>
<comment type="function">
    <text evidence="1">Succinyl-CoA synthetase functions in the citric acid cycle (TCA), coupling the hydrolysis of succinyl-CoA to the synthesis of either ATP or GTP and thus represents the only step of substrate-level phosphorylation in the TCA. The beta subunit provides nucleotide specificity of the enzyme and binds the substrate succinate, while the binding sites for coenzyme A and phosphate are found in the alpha subunit.</text>
</comment>
<comment type="catalytic activity">
    <reaction evidence="1">
        <text>succinate + ATP + CoA = succinyl-CoA + ADP + phosphate</text>
        <dbReference type="Rhea" id="RHEA:17661"/>
        <dbReference type="ChEBI" id="CHEBI:30031"/>
        <dbReference type="ChEBI" id="CHEBI:30616"/>
        <dbReference type="ChEBI" id="CHEBI:43474"/>
        <dbReference type="ChEBI" id="CHEBI:57287"/>
        <dbReference type="ChEBI" id="CHEBI:57292"/>
        <dbReference type="ChEBI" id="CHEBI:456216"/>
        <dbReference type="EC" id="6.2.1.5"/>
    </reaction>
    <physiologicalReaction direction="right-to-left" evidence="1">
        <dbReference type="Rhea" id="RHEA:17663"/>
    </physiologicalReaction>
</comment>
<comment type="catalytic activity">
    <reaction evidence="1">
        <text>GTP + succinate + CoA = succinyl-CoA + GDP + phosphate</text>
        <dbReference type="Rhea" id="RHEA:22120"/>
        <dbReference type="ChEBI" id="CHEBI:30031"/>
        <dbReference type="ChEBI" id="CHEBI:37565"/>
        <dbReference type="ChEBI" id="CHEBI:43474"/>
        <dbReference type="ChEBI" id="CHEBI:57287"/>
        <dbReference type="ChEBI" id="CHEBI:57292"/>
        <dbReference type="ChEBI" id="CHEBI:58189"/>
    </reaction>
    <physiologicalReaction direction="right-to-left" evidence="1">
        <dbReference type="Rhea" id="RHEA:22122"/>
    </physiologicalReaction>
</comment>
<comment type="cofactor">
    <cofactor evidence="1">
        <name>Mg(2+)</name>
        <dbReference type="ChEBI" id="CHEBI:18420"/>
    </cofactor>
    <text evidence="1">Binds 1 Mg(2+) ion per subunit.</text>
</comment>
<comment type="pathway">
    <text evidence="1">Carbohydrate metabolism; tricarboxylic acid cycle; succinate from succinyl-CoA (ligase route): step 1/1.</text>
</comment>
<comment type="subunit">
    <text evidence="1 3">Heterotetramer of two alpha and two beta subunits (By similarity). Interacts with BrxC (PubMed:33722570).</text>
</comment>
<comment type="similarity">
    <text evidence="1">Belongs to the succinate/malate CoA ligase beta subunit family.</text>
</comment>
<dbReference type="EC" id="6.2.1.5" evidence="1"/>
<dbReference type="EMBL" id="AJ000975">
    <property type="protein sequence ID" value="CAA04419.1"/>
    <property type="molecule type" value="Genomic_DNA"/>
</dbReference>
<dbReference type="EMBL" id="AL009126">
    <property type="protein sequence ID" value="CAB13482.1"/>
    <property type="molecule type" value="Genomic_DNA"/>
</dbReference>
<dbReference type="PIR" id="E69719">
    <property type="entry name" value="E69719"/>
</dbReference>
<dbReference type="RefSeq" id="NP_389491.1">
    <property type="nucleotide sequence ID" value="NC_000964.3"/>
</dbReference>
<dbReference type="RefSeq" id="WP_003244732.1">
    <property type="nucleotide sequence ID" value="NZ_OZ025638.1"/>
</dbReference>
<dbReference type="SMR" id="P80886"/>
<dbReference type="FunCoup" id="P80886">
    <property type="interactions" value="680"/>
</dbReference>
<dbReference type="STRING" id="224308.BSU16090"/>
<dbReference type="iPTMnet" id="P80886"/>
<dbReference type="jPOST" id="P80886"/>
<dbReference type="PaxDb" id="224308-BSU16090"/>
<dbReference type="EnsemblBacteria" id="CAB13482">
    <property type="protein sequence ID" value="CAB13482"/>
    <property type="gene ID" value="BSU_16090"/>
</dbReference>
<dbReference type="GeneID" id="938521"/>
<dbReference type="KEGG" id="bsu:BSU16090"/>
<dbReference type="PATRIC" id="fig|224308.179.peg.1749"/>
<dbReference type="eggNOG" id="COG0045">
    <property type="taxonomic scope" value="Bacteria"/>
</dbReference>
<dbReference type="InParanoid" id="P80886"/>
<dbReference type="OrthoDB" id="9802602at2"/>
<dbReference type="PhylomeDB" id="P80886"/>
<dbReference type="BioCyc" id="BSUB:BSU16090-MONOMER"/>
<dbReference type="UniPathway" id="UPA00223">
    <property type="reaction ID" value="UER00999"/>
</dbReference>
<dbReference type="Proteomes" id="UP000001570">
    <property type="component" value="Chromosome"/>
</dbReference>
<dbReference type="GO" id="GO:0005829">
    <property type="term" value="C:cytosol"/>
    <property type="evidence" value="ECO:0000318"/>
    <property type="project" value="GO_Central"/>
</dbReference>
<dbReference type="GO" id="GO:0042709">
    <property type="term" value="C:succinate-CoA ligase complex"/>
    <property type="evidence" value="ECO:0000318"/>
    <property type="project" value="GO_Central"/>
</dbReference>
<dbReference type="GO" id="GO:0005524">
    <property type="term" value="F:ATP binding"/>
    <property type="evidence" value="ECO:0007669"/>
    <property type="project" value="UniProtKB-UniRule"/>
</dbReference>
<dbReference type="GO" id="GO:0000287">
    <property type="term" value="F:magnesium ion binding"/>
    <property type="evidence" value="ECO:0007669"/>
    <property type="project" value="UniProtKB-UniRule"/>
</dbReference>
<dbReference type="GO" id="GO:0004775">
    <property type="term" value="F:succinate-CoA ligase (ADP-forming) activity"/>
    <property type="evidence" value="ECO:0000318"/>
    <property type="project" value="GO_Central"/>
</dbReference>
<dbReference type="GO" id="GO:0004776">
    <property type="term" value="F:succinate-CoA ligase (GDP-forming) activity"/>
    <property type="evidence" value="ECO:0007669"/>
    <property type="project" value="RHEA"/>
</dbReference>
<dbReference type="GO" id="GO:0006104">
    <property type="term" value="P:succinyl-CoA metabolic process"/>
    <property type="evidence" value="ECO:0000318"/>
    <property type="project" value="GO_Central"/>
</dbReference>
<dbReference type="GO" id="GO:0006099">
    <property type="term" value="P:tricarboxylic acid cycle"/>
    <property type="evidence" value="ECO:0000318"/>
    <property type="project" value="GO_Central"/>
</dbReference>
<dbReference type="FunFam" id="3.30.1490.20:FF:000002">
    <property type="entry name" value="Succinate--CoA ligase [ADP-forming] subunit beta"/>
    <property type="match status" value="1"/>
</dbReference>
<dbReference type="FunFam" id="3.30.470.20:FF:000002">
    <property type="entry name" value="Succinate--CoA ligase [ADP-forming] subunit beta"/>
    <property type="match status" value="1"/>
</dbReference>
<dbReference type="FunFam" id="3.40.50.261:FF:000001">
    <property type="entry name" value="Succinate--CoA ligase [ADP-forming] subunit beta"/>
    <property type="match status" value="1"/>
</dbReference>
<dbReference type="Gene3D" id="3.30.1490.20">
    <property type="entry name" value="ATP-grasp fold, A domain"/>
    <property type="match status" value="1"/>
</dbReference>
<dbReference type="Gene3D" id="3.30.470.20">
    <property type="entry name" value="ATP-grasp fold, B domain"/>
    <property type="match status" value="1"/>
</dbReference>
<dbReference type="Gene3D" id="3.40.50.261">
    <property type="entry name" value="Succinyl-CoA synthetase domains"/>
    <property type="match status" value="1"/>
</dbReference>
<dbReference type="HAMAP" id="MF_00558">
    <property type="entry name" value="Succ_CoA_beta"/>
    <property type="match status" value="1"/>
</dbReference>
<dbReference type="InterPro" id="IPR011761">
    <property type="entry name" value="ATP-grasp"/>
</dbReference>
<dbReference type="InterPro" id="IPR013650">
    <property type="entry name" value="ATP-grasp_succ-CoA_synth-type"/>
</dbReference>
<dbReference type="InterPro" id="IPR013815">
    <property type="entry name" value="ATP_grasp_subdomain_1"/>
</dbReference>
<dbReference type="InterPro" id="IPR017866">
    <property type="entry name" value="Succ-CoA_synthase_bsu_CS"/>
</dbReference>
<dbReference type="InterPro" id="IPR005811">
    <property type="entry name" value="SUCC_ACL_C"/>
</dbReference>
<dbReference type="InterPro" id="IPR005809">
    <property type="entry name" value="Succ_CoA_ligase-like_bsu"/>
</dbReference>
<dbReference type="InterPro" id="IPR016102">
    <property type="entry name" value="Succinyl-CoA_synth-like"/>
</dbReference>
<dbReference type="NCBIfam" id="NF001913">
    <property type="entry name" value="PRK00696.1"/>
    <property type="match status" value="1"/>
</dbReference>
<dbReference type="NCBIfam" id="TIGR01016">
    <property type="entry name" value="sucCoAbeta"/>
    <property type="match status" value="1"/>
</dbReference>
<dbReference type="PANTHER" id="PTHR11815:SF10">
    <property type="entry name" value="SUCCINATE--COA LIGASE [GDP-FORMING] SUBUNIT BETA, MITOCHONDRIAL"/>
    <property type="match status" value="1"/>
</dbReference>
<dbReference type="PANTHER" id="PTHR11815">
    <property type="entry name" value="SUCCINYL-COA SYNTHETASE BETA CHAIN"/>
    <property type="match status" value="1"/>
</dbReference>
<dbReference type="Pfam" id="PF08442">
    <property type="entry name" value="ATP-grasp_2"/>
    <property type="match status" value="1"/>
</dbReference>
<dbReference type="Pfam" id="PF00549">
    <property type="entry name" value="Ligase_CoA"/>
    <property type="match status" value="1"/>
</dbReference>
<dbReference type="PIRSF" id="PIRSF001554">
    <property type="entry name" value="SucCS_beta"/>
    <property type="match status" value="1"/>
</dbReference>
<dbReference type="SUPFAM" id="SSF56059">
    <property type="entry name" value="Glutathione synthetase ATP-binding domain-like"/>
    <property type="match status" value="1"/>
</dbReference>
<dbReference type="SUPFAM" id="SSF52210">
    <property type="entry name" value="Succinyl-CoA synthetase domains"/>
    <property type="match status" value="1"/>
</dbReference>
<dbReference type="PROSITE" id="PS50975">
    <property type="entry name" value="ATP_GRASP"/>
    <property type="match status" value="1"/>
</dbReference>
<dbReference type="PROSITE" id="PS01217">
    <property type="entry name" value="SUCCINYL_COA_LIG_3"/>
    <property type="match status" value="1"/>
</dbReference>
<evidence type="ECO:0000255" key="1">
    <source>
        <dbReference type="HAMAP-Rule" id="MF_00558"/>
    </source>
</evidence>
<evidence type="ECO:0000269" key="2">
    <source>
    </source>
</evidence>
<evidence type="ECO:0000269" key="3">
    <source>
    </source>
</evidence>
<evidence type="ECO:0000303" key="4">
    <source>
    </source>
</evidence>
<sequence>MNIHEYQGKEVLRKYGVSVPEGKVAFTAEEAVESAKSLSSSVYVVKAQIHAGGRGKAGGVKIAKSLDEVKAYAEELLGKTLVTHQTGPDGQVIKRLLIEEGCDIKKEYYIGLVLDRATSRIVLMASEEGGTEIEEVAEKTPEKIKKAVIDPAVGLQGYQAREIAFAINIPKELVGKAAKFMLGLYKAFVEKDCSIAEINPLVVTGDGNVMALDAKLNFDSNALYRQKDIMEYRDLDEEDPKEIEASKYDLSYISLDGNIGCMVNGAGLAMSTMDIIKHYGGEPANFLDVGGGATAEKVTEAFKIILSDQNVKGIFVNIFGGIMKCDVIAEGVVEATRQVGLTLPLVVRLEGTNVDLGKKILSESGLNITSAESMADGAQKIVSLV</sequence>
<protein>
    <recommendedName>
        <fullName evidence="1">Succinate--CoA ligase [ADP-forming] subunit beta</fullName>
        <ecNumber evidence="1">6.2.1.5</ecNumber>
    </recommendedName>
    <alternativeName>
        <fullName evidence="1">Succinyl-CoA synthetase subunit beta</fullName>
        <shortName evidence="1">SCS-beta</shortName>
    </alternativeName>
</protein>
<reference key="1">
    <citation type="submission" date="1997-10" db="EMBL/GenBank/DDBJ databases">
        <title>Cloning and sequencing 7.5 Kbp of DNA from Bacillus subtilis upstream of the codV gene.</title>
        <authorList>
            <person name="Foulger D."/>
            <person name="Errington J."/>
        </authorList>
    </citation>
    <scope>NUCLEOTIDE SEQUENCE [GENOMIC DNA]</scope>
    <source>
        <strain>168</strain>
    </source>
</reference>
<reference key="2">
    <citation type="journal article" date="1997" name="Nature">
        <title>The complete genome sequence of the Gram-positive bacterium Bacillus subtilis.</title>
        <authorList>
            <person name="Kunst F."/>
            <person name="Ogasawara N."/>
            <person name="Moszer I."/>
            <person name="Albertini A.M."/>
            <person name="Alloni G."/>
            <person name="Azevedo V."/>
            <person name="Bertero M.G."/>
            <person name="Bessieres P."/>
            <person name="Bolotin A."/>
            <person name="Borchert S."/>
            <person name="Borriss R."/>
            <person name="Boursier L."/>
            <person name="Brans A."/>
            <person name="Braun M."/>
            <person name="Brignell S.C."/>
            <person name="Bron S."/>
            <person name="Brouillet S."/>
            <person name="Bruschi C.V."/>
            <person name="Caldwell B."/>
            <person name="Capuano V."/>
            <person name="Carter N.M."/>
            <person name="Choi S.-K."/>
            <person name="Codani J.-J."/>
            <person name="Connerton I.F."/>
            <person name="Cummings N.J."/>
            <person name="Daniel R.A."/>
            <person name="Denizot F."/>
            <person name="Devine K.M."/>
            <person name="Duesterhoeft A."/>
            <person name="Ehrlich S.D."/>
            <person name="Emmerson P.T."/>
            <person name="Entian K.-D."/>
            <person name="Errington J."/>
            <person name="Fabret C."/>
            <person name="Ferrari E."/>
            <person name="Foulger D."/>
            <person name="Fritz C."/>
            <person name="Fujita M."/>
            <person name="Fujita Y."/>
            <person name="Fuma S."/>
            <person name="Galizzi A."/>
            <person name="Galleron N."/>
            <person name="Ghim S.-Y."/>
            <person name="Glaser P."/>
            <person name="Goffeau A."/>
            <person name="Golightly E.J."/>
            <person name="Grandi G."/>
            <person name="Guiseppi G."/>
            <person name="Guy B.J."/>
            <person name="Haga K."/>
            <person name="Haiech J."/>
            <person name="Harwood C.R."/>
            <person name="Henaut A."/>
            <person name="Hilbert H."/>
            <person name="Holsappel S."/>
            <person name="Hosono S."/>
            <person name="Hullo M.-F."/>
            <person name="Itaya M."/>
            <person name="Jones L.-M."/>
            <person name="Joris B."/>
            <person name="Karamata D."/>
            <person name="Kasahara Y."/>
            <person name="Klaerr-Blanchard M."/>
            <person name="Klein C."/>
            <person name="Kobayashi Y."/>
            <person name="Koetter P."/>
            <person name="Koningstein G."/>
            <person name="Krogh S."/>
            <person name="Kumano M."/>
            <person name="Kurita K."/>
            <person name="Lapidus A."/>
            <person name="Lardinois S."/>
            <person name="Lauber J."/>
            <person name="Lazarevic V."/>
            <person name="Lee S.-M."/>
            <person name="Levine A."/>
            <person name="Liu H."/>
            <person name="Masuda S."/>
            <person name="Mauel C."/>
            <person name="Medigue C."/>
            <person name="Medina N."/>
            <person name="Mellado R.P."/>
            <person name="Mizuno M."/>
            <person name="Moestl D."/>
            <person name="Nakai S."/>
            <person name="Noback M."/>
            <person name="Noone D."/>
            <person name="O'Reilly M."/>
            <person name="Ogawa K."/>
            <person name="Ogiwara A."/>
            <person name="Oudega B."/>
            <person name="Park S.-H."/>
            <person name="Parro V."/>
            <person name="Pohl T.M."/>
            <person name="Portetelle D."/>
            <person name="Porwollik S."/>
            <person name="Prescott A.M."/>
            <person name="Presecan E."/>
            <person name="Pujic P."/>
            <person name="Purnelle B."/>
            <person name="Rapoport G."/>
            <person name="Rey M."/>
            <person name="Reynolds S."/>
            <person name="Rieger M."/>
            <person name="Rivolta C."/>
            <person name="Rocha E."/>
            <person name="Roche B."/>
            <person name="Rose M."/>
            <person name="Sadaie Y."/>
            <person name="Sato T."/>
            <person name="Scanlan E."/>
            <person name="Schleich S."/>
            <person name="Schroeter R."/>
            <person name="Scoffone F."/>
            <person name="Sekiguchi J."/>
            <person name="Sekowska A."/>
            <person name="Seror S.J."/>
            <person name="Serror P."/>
            <person name="Shin B.-S."/>
            <person name="Soldo B."/>
            <person name="Sorokin A."/>
            <person name="Tacconi E."/>
            <person name="Takagi T."/>
            <person name="Takahashi H."/>
            <person name="Takemaru K."/>
            <person name="Takeuchi M."/>
            <person name="Tamakoshi A."/>
            <person name="Tanaka T."/>
            <person name="Terpstra P."/>
            <person name="Tognoni A."/>
            <person name="Tosato V."/>
            <person name="Uchiyama S."/>
            <person name="Vandenbol M."/>
            <person name="Vannier F."/>
            <person name="Vassarotti A."/>
            <person name="Viari A."/>
            <person name="Wambutt R."/>
            <person name="Wedler E."/>
            <person name="Wedler H."/>
            <person name="Weitzenegger T."/>
            <person name="Winters P."/>
            <person name="Wipat A."/>
            <person name="Yamamoto H."/>
            <person name="Yamane K."/>
            <person name="Yasumoto K."/>
            <person name="Yata K."/>
            <person name="Yoshida K."/>
            <person name="Yoshikawa H.-F."/>
            <person name="Zumstein E."/>
            <person name="Yoshikawa H."/>
            <person name="Danchin A."/>
        </authorList>
    </citation>
    <scope>NUCLEOTIDE SEQUENCE [LARGE SCALE GENOMIC DNA]</scope>
    <source>
        <strain>168</strain>
    </source>
</reference>
<reference key="3">
    <citation type="journal article" date="1997" name="Electrophoresis">
        <title>First steps from a two-dimensional protein index towards a response-regulation map for Bacillus subtilis.</title>
        <authorList>
            <person name="Antelmann H."/>
            <person name="Bernhardt J."/>
            <person name="Schmid R."/>
            <person name="Mach H."/>
            <person name="Voelker U."/>
            <person name="Hecker M."/>
        </authorList>
    </citation>
    <scope>PROTEIN SEQUENCE OF 1-17</scope>
    <source>
        <strain>168 / IS58</strain>
    </source>
</reference>
<reference key="4">
    <citation type="journal article" date="2007" name="Mol. Cell. Proteomics">
        <title>The serine/threonine/tyrosine phosphoproteome of the model bacterium Bacillus subtilis.</title>
        <authorList>
            <person name="Macek B."/>
            <person name="Mijakovic I."/>
            <person name="Olsen J.V."/>
            <person name="Gnad F."/>
            <person name="Kumar C."/>
            <person name="Jensen P.R."/>
            <person name="Mann M."/>
        </authorList>
    </citation>
    <scope>PHOSPHORYLATION [LARGE SCALE ANALYSIS] AT SER-220</scope>
    <scope>IDENTIFICATION BY MASS SPECTROMETRY</scope>
    <source>
        <strain>168</strain>
    </source>
</reference>
<reference key="5">
    <citation type="journal article" date="2021" name="Redox Biol.">
        <title>The Bacillus subtilis monothiol bacilliredoxin BrxC (YtxJ) and the Bdr (YpdA) disulfide reductase reduce S-bacillithiolated proteins.</title>
        <authorList>
            <person name="Gaballa A."/>
            <person name="Su T.T."/>
            <person name="Helmann J.D."/>
        </authorList>
    </citation>
    <scope>INTERACTION WITH BRXC</scope>
    <scope>IDENTIFICATION BY MASS SPECTROMETRY</scope>
    <source>
        <strain evidence="4">168 / CU1065</strain>
    </source>
</reference>
<proteinExistence type="evidence at protein level"/>
<gene>
    <name evidence="1" type="primary">sucC</name>
    <name type="ordered locus">BSU16090</name>
</gene>
<organism>
    <name type="scientific">Bacillus subtilis (strain 168)</name>
    <dbReference type="NCBI Taxonomy" id="224308"/>
    <lineage>
        <taxon>Bacteria</taxon>
        <taxon>Bacillati</taxon>
        <taxon>Bacillota</taxon>
        <taxon>Bacilli</taxon>
        <taxon>Bacillales</taxon>
        <taxon>Bacillaceae</taxon>
        <taxon>Bacillus</taxon>
    </lineage>
</organism>